<organism>
    <name type="scientific">Schizosaccharomyces pombe (strain 972 / ATCC 24843)</name>
    <name type="common">Fission yeast</name>
    <dbReference type="NCBI Taxonomy" id="284812"/>
    <lineage>
        <taxon>Eukaryota</taxon>
        <taxon>Fungi</taxon>
        <taxon>Dikarya</taxon>
        <taxon>Ascomycota</taxon>
        <taxon>Taphrinomycotina</taxon>
        <taxon>Schizosaccharomycetes</taxon>
        <taxon>Schizosaccharomycetales</taxon>
        <taxon>Schizosaccharomycetaceae</taxon>
        <taxon>Schizosaccharomyces</taxon>
    </lineage>
</organism>
<comment type="function">
    <text evidence="4">Component of the DSC E3 ubiquitin ligase complex which is required for the sre1 transcriptional activator proteolytic cleavage to release the soluble transcription factor from the membrane in low oxygen or sterol conditions. The complex also plays an important role in the multivesicular body (MVB) pathway and functions in a post-endoplasmic reticulum pathway for protein degradation.</text>
</comment>
<comment type="pathway">
    <text>Protein modification; protein ubiquitination.</text>
</comment>
<comment type="subunit">
    <text evidence="4">Component of the DSC E3 ubiquitin ligase complex composed of dsc1, dsc2, dsc3 and dsc4.</text>
</comment>
<comment type="subcellular location">
    <subcellularLocation>
        <location evidence="5">Endoplasmic reticulum membrane</location>
        <topology evidence="1">Multi-pass membrane protein</topology>
    </subcellularLocation>
    <subcellularLocation>
        <location evidence="3">Golgi apparatus membrane</location>
        <topology evidence="1">Multi-pass membrane protein</topology>
    </subcellularLocation>
</comment>
<protein>
    <recommendedName>
        <fullName>DSC E3 ubiquitin ligase complex subunit 4</fullName>
    </recommendedName>
    <alternativeName>
        <fullName>Defective for SREBP cleavage protein 4</fullName>
    </alternativeName>
</protein>
<accession>O14175</accession>
<keyword id="KW-0256">Endoplasmic reticulum</keyword>
<keyword id="KW-0333">Golgi apparatus</keyword>
<keyword id="KW-0472">Membrane</keyword>
<keyword id="KW-1185">Reference proteome</keyword>
<keyword id="KW-0812">Transmembrane</keyword>
<keyword id="KW-1133">Transmembrane helix</keyword>
<keyword id="KW-0833">Ubl conjugation pathway</keyword>
<reference key="1">
    <citation type="journal article" date="2002" name="Nature">
        <title>The genome sequence of Schizosaccharomyces pombe.</title>
        <authorList>
            <person name="Wood V."/>
            <person name="Gwilliam R."/>
            <person name="Rajandream M.A."/>
            <person name="Lyne M.H."/>
            <person name="Lyne R."/>
            <person name="Stewart A."/>
            <person name="Sgouros J.G."/>
            <person name="Peat N."/>
            <person name="Hayles J."/>
            <person name="Baker S.G."/>
            <person name="Basham D."/>
            <person name="Bowman S."/>
            <person name="Brooks K."/>
            <person name="Brown D."/>
            <person name="Brown S."/>
            <person name="Chillingworth T."/>
            <person name="Churcher C.M."/>
            <person name="Collins M."/>
            <person name="Connor R."/>
            <person name="Cronin A."/>
            <person name="Davis P."/>
            <person name="Feltwell T."/>
            <person name="Fraser A."/>
            <person name="Gentles S."/>
            <person name="Goble A."/>
            <person name="Hamlin N."/>
            <person name="Harris D.E."/>
            <person name="Hidalgo J."/>
            <person name="Hodgson G."/>
            <person name="Holroyd S."/>
            <person name="Hornsby T."/>
            <person name="Howarth S."/>
            <person name="Huckle E.J."/>
            <person name="Hunt S."/>
            <person name="Jagels K."/>
            <person name="James K.D."/>
            <person name="Jones L."/>
            <person name="Jones M."/>
            <person name="Leather S."/>
            <person name="McDonald S."/>
            <person name="McLean J."/>
            <person name="Mooney P."/>
            <person name="Moule S."/>
            <person name="Mungall K.L."/>
            <person name="Murphy L.D."/>
            <person name="Niblett D."/>
            <person name="Odell C."/>
            <person name="Oliver K."/>
            <person name="O'Neil S."/>
            <person name="Pearson D."/>
            <person name="Quail M.A."/>
            <person name="Rabbinowitsch E."/>
            <person name="Rutherford K.M."/>
            <person name="Rutter S."/>
            <person name="Saunders D."/>
            <person name="Seeger K."/>
            <person name="Sharp S."/>
            <person name="Skelton J."/>
            <person name="Simmonds M.N."/>
            <person name="Squares R."/>
            <person name="Squares S."/>
            <person name="Stevens K."/>
            <person name="Taylor K."/>
            <person name="Taylor R.G."/>
            <person name="Tivey A."/>
            <person name="Walsh S.V."/>
            <person name="Warren T."/>
            <person name="Whitehead S."/>
            <person name="Woodward J.R."/>
            <person name="Volckaert G."/>
            <person name="Aert R."/>
            <person name="Robben J."/>
            <person name="Grymonprez B."/>
            <person name="Weltjens I."/>
            <person name="Vanstreels E."/>
            <person name="Rieger M."/>
            <person name="Schaefer M."/>
            <person name="Mueller-Auer S."/>
            <person name="Gabel C."/>
            <person name="Fuchs M."/>
            <person name="Duesterhoeft A."/>
            <person name="Fritzc C."/>
            <person name="Holzer E."/>
            <person name="Moestl D."/>
            <person name="Hilbert H."/>
            <person name="Borzym K."/>
            <person name="Langer I."/>
            <person name="Beck A."/>
            <person name="Lehrach H."/>
            <person name="Reinhardt R."/>
            <person name="Pohl T.M."/>
            <person name="Eger P."/>
            <person name="Zimmermann W."/>
            <person name="Wedler H."/>
            <person name="Wambutt R."/>
            <person name="Purnelle B."/>
            <person name="Goffeau A."/>
            <person name="Cadieu E."/>
            <person name="Dreano S."/>
            <person name="Gloux S."/>
            <person name="Lelaure V."/>
            <person name="Mottier S."/>
            <person name="Galibert F."/>
            <person name="Aves S.J."/>
            <person name="Xiang Z."/>
            <person name="Hunt C."/>
            <person name="Moore K."/>
            <person name="Hurst S.M."/>
            <person name="Lucas M."/>
            <person name="Rochet M."/>
            <person name="Gaillardin C."/>
            <person name="Tallada V.A."/>
            <person name="Garzon A."/>
            <person name="Thode G."/>
            <person name="Daga R.R."/>
            <person name="Cruzado L."/>
            <person name="Jimenez J."/>
            <person name="Sanchez M."/>
            <person name="del Rey F."/>
            <person name="Benito J."/>
            <person name="Dominguez A."/>
            <person name="Revuelta J.L."/>
            <person name="Moreno S."/>
            <person name="Armstrong J."/>
            <person name="Forsburg S.L."/>
            <person name="Cerutti L."/>
            <person name="Lowe T."/>
            <person name="McCombie W.R."/>
            <person name="Paulsen I."/>
            <person name="Potashkin J."/>
            <person name="Shpakovski G.V."/>
            <person name="Ussery D."/>
            <person name="Barrell B.G."/>
            <person name="Nurse P."/>
        </authorList>
    </citation>
    <scope>NUCLEOTIDE SEQUENCE [LARGE SCALE GENOMIC DNA]</scope>
    <source>
        <strain>972 / ATCC 24843</strain>
    </source>
</reference>
<reference key="2">
    <citation type="journal article" date="2006" name="Nat. Biotechnol.">
        <title>ORFeome cloning and global analysis of protein localization in the fission yeast Schizosaccharomyces pombe.</title>
        <authorList>
            <person name="Matsuyama A."/>
            <person name="Arai R."/>
            <person name="Yashiroda Y."/>
            <person name="Shirai A."/>
            <person name="Kamata A."/>
            <person name="Sekido S."/>
            <person name="Kobayashi Y."/>
            <person name="Hashimoto A."/>
            <person name="Hamamoto M."/>
            <person name="Hiraoka Y."/>
            <person name="Horinouchi S."/>
            <person name="Yoshida M."/>
        </authorList>
    </citation>
    <scope>SUBCELLULAR LOCATION [LARGE SCALE ANALYSIS]</scope>
</reference>
<reference key="3">
    <citation type="journal article" date="2011" name="Mol. Cell">
        <title>Yeast SREBP cleavage activation requires the Golgi Dsc E3 ligase complex.</title>
        <authorList>
            <person name="Stewart E.V."/>
            <person name="Nwosu C.C."/>
            <person name="Tong Z."/>
            <person name="Roguev A."/>
            <person name="Cummins T.D."/>
            <person name="Kim D.U."/>
            <person name="Hayles J."/>
            <person name="Park H.O."/>
            <person name="Hoe K.L."/>
            <person name="Powell D.W."/>
            <person name="Krogan N.J."/>
            <person name="Espenshade P.J."/>
        </authorList>
    </citation>
    <scope>FUNCTION</scope>
    <scope>IDENTIFICATION IN THE DCS COMPLEX</scope>
    <scope>SUBCELLULAR LOCATION</scope>
</reference>
<proteinExistence type="evidence at protein level"/>
<name>DSC4_SCHPO</name>
<evidence type="ECO:0000255" key="1"/>
<evidence type="ECO:0000256" key="2">
    <source>
        <dbReference type="SAM" id="MobiDB-lite"/>
    </source>
</evidence>
<evidence type="ECO:0000269" key="3">
    <source>
    </source>
</evidence>
<evidence type="ECO:0000269" key="4">
    <source>
    </source>
</evidence>
<evidence type="ECO:0000305" key="5">
    <source>
    </source>
</evidence>
<dbReference type="EMBL" id="CU329670">
    <property type="protein sequence ID" value="CAB11283.1"/>
    <property type="molecule type" value="Genomic_DNA"/>
</dbReference>
<dbReference type="PIR" id="T38802">
    <property type="entry name" value="T38802"/>
</dbReference>
<dbReference type="RefSeq" id="NP_594964.1">
    <property type="nucleotide sequence ID" value="NM_001020395.2"/>
</dbReference>
<dbReference type="BioGRID" id="279818">
    <property type="interactions" value="259"/>
</dbReference>
<dbReference type="STRING" id="284812.O14175"/>
<dbReference type="iPTMnet" id="O14175"/>
<dbReference type="PaxDb" id="4896-SPAC4D7.11.1"/>
<dbReference type="EnsemblFungi" id="SPAC4D7.11.1">
    <property type="protein sequence ID" value="SPAC4D7.11.1:pep"/>
    <property type="gene ID" value="SPAC4D7.11"/>
</dbReference>
<dbReference type="GeneID" id="2543396"/>
<dbReference type="KEGG" id="spo:2543396"/>
<dbReference type="PomBase" id="SPAC4D7.11">
    <property type="gene designation" value="dsc4"/>
</dbReference>
<dbReference type="VEuPathDB" id="FungiDB:SPAC4D7.11"/>
<dbReference type="eggNOG" id="ENOG502S4TY">
    <property type="taxonomic scope" value="Eukaryota"/>
</dbReference>
<dbReference type="HOGENOM" id="CLU_990982_0_0_1"/>
<dbReference type="InParanoid" id="O14175"/>
<dbReference type="OMA" id="FFRCLDM"/>
<dbReference type="UniPathway" id="UPA00143"/>
<dbReference type="PRO" id="PR:O14175"/>
<dbReference type="Proteomes" id="UP000002485">
    <property type="component" value="Chromosome I"/>
</dbReference>
<dbReference type="GO" id="GO:0044695">
    <property type="term" value="C:Dsc E3 ubiquitin ligase complex"/>
    <property type="evidence" value="ECO:0000314"/>
    <property type="project" value="PomBase"/>
</dbReference>
<dbReference type="GO" id="GO:0005783">
    <property type="term" value="C:endoplasmic reticulum"/>
    <property type="evidence" value="ECO:0007005"/>
    <property type="project" value="PomBase"/>
</dbReference>
<dbReference type="GO" id="GO:0005789">
    <property type="term" value="C:endoplasmic reticulum membrane"/>
    <property type="evidence" value="ECO:0007669"/>
    <property type="project" value="UniProtKB-SubCell"/>
</dbReference>
<dbReference type="GO" id="GO:0000139">
    <property type="term" value="C:Golgi membrane"/>
    <property type="evidence" value="ECO:0007669"/>
    <property type="project" value="UniProtKB-SubCell"/>
</dbReference>
<dbReference type="GO" id="GO:0016567">
    <property type="term" value="P:protein ubiquitination"/>
    <property type="evidence" value="ECO:0007669"/>
    <property type="project" value="UniProtKB-UniPathway"/>
</dbReference>
<dbReference type="GO" id="GO:0032933">
    <property type="term" value="P:SREBP signaling pathway"/>
    <property type="evidence" value="ECO:0000315"/>
    <property type="project" value="PomBase"/>
</dbReference>
<dbReference type="InterPro" id="IPR038967">
    <property type="entry name" value="Dsc4-like"/>
</dbReference>
<dbReference type="InterPro" id="IPR013715">
    <property type="entry name" value="DUF1746"/>
</dbReference>
<dbReference type="PANTHER" id="PTHR39405">
    <property type="entry name" value="DSC E3 UBIQUITIN LIGASE COMPLEX SUBUNIT 4"/>
    <property type="match status" value="1"/>
</dbReference>
<dbReference type="PANTHER" id="PTHR39405:SF1">
    <property type="entry name" value="DSC E3 UBIQUITIN LIGASE COMPLEX SUBUNIT 4"/>
    <property type="match status" value="1"/>
</dbReference>
<dbReference type="Pfam" id="PF08508">
    <property type="entry name" value="DUF1746"/>
    <property type="match status" value="1"/>
</dbReference>
<gene>
    <name type="primary">dsc4</name>
    <name type="ORF">SPAC4D7.11</name>
</gene>
<sequence length="281" mass="31717">MDTIVLDQRGEVFSFFRSLDMLCYAIIAQQYFQDPTVLLLLLKVFVQLSYLTPKPFSQLNALPLFYPLLLNFLISLMVRMFFNLPTAGESLDGYLYGGSIINFIGEKNESSRIDFITSDLVLFCLQIFMALILIASNKRPTQASHIQASQSGLSNVDGDEEPSDLITEDSRDTQQGQRQEDLQRQLENERSRLIARFSHSLYSFQHGLSFGSPQNRNTPLQRQSADSYSTPVCIEVDSEDWKDLVWKSQYATENANTNSINNSPLSSNTTGVPNSVLTNPI</sequence>
<feature type="chain" id="PRO_0000116701" description="DSC E3 ubiquitin ligase complex subunit 4">
    <location>
        <begin position="1"/>
        <end position="281"/>
    </location>
</feature>
<feature type="transmembrane region" description="Helical" evidence="1">
    <location>
        <begin position="22"/>
        <end position="42"/>
    </location>
</feature>
<feature type="transmembrane region" description="Helical" evidence="1">
    <location>
        <begin position="62"/>
        <end position="82"/>
    </location>
</feature>
<feature type="transmembrane region" description="Helical" evidence="1">
    <location>
        <begin position="84"/>
        <end position="104"/>
    </location>
</feature>
<feature type="transmembrane region" description="Helical" evidence="1">
    <location>
        <begin position="115"/>
        <end position="135"/>
    </location>
</feature>
<feature type="region of interest" description="Disordered" evidence="2">
    <location>
        <begin position="145"/>
        <end position="183"/>
    </location>
</feature>
<feature type="region of interest" description="Disordered" evidence="2">
    <location>
        <begin position="256"/>
        <end position="281"/>
    </location>
</feature>
<feature type="compositionally biased region" description="Polar residues" evidence="2">
    <location>
        <begin position="145"/>
        <end position="154"/>
    </location>
</feature>
<feature type="compositionally biased region" description="Acidic residues" evidence="2">
    <location>
        <begin position="157"/>
        <end position="167"/>
    </location>
</feature>
<feature type="compositionally biased region" description="Basic and acidic residues" evidence="2">
    <location>
        <begin position="168"/>
        <end position="183"/>
    </location>
</feature>